<feature type="chain" id="PRO_1000059649" description="Chaperone protein DnaK">
    <location>
        <begin position="1"/>
        <end position="636"/>
    </location>
</feature>
<feature type="region of interest" description="Disordered" evidence="2">
    <location>
        <begin position="601"/>
        <end position="636"/>
    </location>
</feature>
<feature type="compositionally biased region" description="Acidic residues" evidence="2">
    <location>
        <begin position="620"/>
        <end position="630"/>
    </location>
</feature>
<feature type="modified residue" description="Phosphothreonine; by autocatalysis" evidence="1">
    <location>
        <position position="197"/>
    </location>
</feature>
<protein>
    <recommendedName>
        <fullName evidence="1">Chaperone protein DnaK</fullName>
    </recommendedName>
    <alternativeName>
        <fullName evidence="1">HSP70</fullName>
    </alternativeName>
    <alternativeName>
        <fullName evidence="1">Heat shock 70 kDa protein</fullName>
    </alternativeName>
    <alternativeName>
        <fullName evidence="1">Heat shock protein 70</fullName>
    </alternativeName>
</protein>
<comment type="function">
    <text evidence="1">Acts as a chaperone.</text>
</comment>
<comment type="induction">
    <text evidence="1">By stress conditions e.g. heat shock.</text>
</comment>
<comment type="similarity">
    <text evidence="1">Belongs to the heat shock protein 70 family.</text>
</comment>
<gene>
    <name evidence="1" type="primary">dnaK</name>
    <name type="ordered locus">Rsph17025_2766</name>
</gene>
<accession>A4WW89</accession>
<keyword id="KW-0067">ATP-binding</keyword>
<keyword id="KW-0143">Chaperone</keyword>
<keyword id="KW-0547">Nucleotide-binding</keyword>
<keyword id="KW-0597">Phosphoprotein</keyword>
<keyword id="KW-0346">Stress response</keyword>
<proteinExistence type="inferred from homology"/>
<name>DNAK_CERS5</name>
<sequence length="636" mass="68698">MAKVIGIDLGTTNSCVAIMDGAQPRVIENSEGARTTPSIVGFTDSERLVGQPAKRQAVTNPSNTVFAVKRLIGRRVGDAEVEKDKKLVPYAIVNGGNGDAWVEVRGEKYSPSQISAFILQKMKETAEAYLGESVTQAVITVPAYFNDAQRQATKDAGKIAGLEVLRIINEPTAAALAYGLDKKDTKTIAVYDLGGGTFDITILEIDDGLFEVKSTNGDTFLGGEDFDMRIVNYLADEFKKEHGVDLTLDKMALQRLKEAAEKAKIELSSSQQTEINQPFISMDRNTGQPLHMVMKLTRAKLESLVADLIKKSLKPCEAALKDAGVSKSDIDEVVLVGGMTRMPRVVEEVTKFFGKEPHKGVNPDEVVALGAAIQAGVLQGDVKDVVLLDVTPLSLGIETLGGVFTRLIDRNTTIPTKKSQVFSTAEDNQNAVTIRVFQGEREMAADNKMLGQFNLEDIPPAPRGMPQIEVTFDIDANGIVSVSAKDKGTGKSQNITIQASGGLSDEDIEKMVRDAEANAEADKKRRELVETKNQGESLLHSTRKSIEEHGDKVDPSTVEAIELAMGALEESLKTEDAGKIKGGIQNLTEAAMRLGEAIYKASQSETGAAPDEDGPRSVDDDIVDADFEDLGENKRK</sequence>
<evidence type="ECO:0000255" key="1">
    <source>
        <dbReference type="HAMAP-Rule" id="MF_00332"/>
    </source>
</evidence>
<evidence type="ECO:0000256" key="2">
    <source>
        <dbReference type="SAM" id="MobiDB-lite"/>
    </source>
</evidence>
<reference key="1">
    <citation type="submission" date="2007-04" db="EMBL/GenBank/DDBJ databases">
        <title>Complete sequence of chromosome of Rhodobacter sphaeroides ATCC 17025.</title>
        <authorList>
            <consortium name="US DOE Joint Genome Institute"/>
            <person name="Copeland A."/>
            <person name="Lucas S."/>
            <person name="Lapidus A."/>
            <person name="Barry K."/>
            <person name="Detter J.C."/>
            <person name="Glavina del Rio T."/>
            <person name="Hammon N."/>
            <person name="Israni S."/>
            <person name="Dalin E."/>
            <person name="Tice H."/>
            <person name="Pitluck S."/>
            <person name="Chertkov O."/>
            <person name="Brettin T."/>
            <person name="Bruce D."/>
            <person name="Han C."/>
            <person name="Schmutz J."/>
            <person name="Larimer F."/>
            <person name="Land M."/>
            <person name="Hauser L."/>
            <person name="Kyrpides N."/>
            <person name="Kim E."/>
            <person name="Richardson P."/>
            <person name="Mackenzie C."/>
            <person name="Choudhary M."/>
            <person name="Donohue T.J."/>
            <person name="Kaplan S."/>
        </authorList>
    </citation>
    <scope>NUCLEOTIDE SEQUENCE [LARGE SCALE GENOMIC DNA]</scope>
    <source>
        <strain>ATCC 17025 / ATH 2.4.3</strain>
    </source>
</reference>
<dbReference type="EMBL" id="CP000661">
    <property type="protein sequence ID" value="ABP71653.1"/>
    <property type="molecule type" value="Genomic_DNA"/>
</dbReference>
<dbReference type="SMR" id="A4WW89"/>
<dbReference type="STRING" id="349102.Rsph17025_2766"/>
<dbReference type="KEGG" id="rsq:Rsph17025_2766"/>
<dbReference type="eggNOG" id="COG0443">
    <property type="taxonomic scope" value="Bacteria"/>
</dbReference>
<dbReference type="HOGENOM" id="CLU_005965_2_1_5"/>
<dbReference type="BioCyc" id="RSPH349102:G1G8M-2847-MONOMER"/>
<dbReference type="GO" id="GO:0005524">
    <property type="term" value="F:ATP binding"/>
    <property type="evidence" value="ECO:0007669"/>
    <property type="project" value="UniProtKB-UniRule"/>
</dbReference>
<dbReference type="GO" id="GO:0140662">
    <property type="term" value="F:ATP-dependent protein folding chaperone"/>
    <property type="evidence" value="ECO:0007669"/>
    <property type="project" value="InterPro"/>
</dbReference>
<dbReference type="GO" id="GO:0051082">
    <property type="term" value="F:unfolded protein binding"/>
    <property type="evidence" value="ECO:0007669"/>
    <property type="project" value="InterPro"/>
</dbReference>
<dbReference type="CDD" id="cd11733">
    <property type="entry name" value="ASKHA_NBD_HSP70_HSPA9"/>
    <property type="match status" value="1"/>
</dbReference>
<dbReference type="FunFam" id="2.60.34.10:FF:000014">
    <property type="entry name" value="Chaperone protein DnaK HSP70"/>
    <property type="match status" value="1"/>
</dbReference>
<dbReference type="FunFam" id="1.20.1270.10:FF:000001">
    <property type="entry name" value="Molecular chaperone DnaK"/>
    <property type="match status" value="1"/>
</dbReference>
<dbReference type="FunFam" id="3.30.420.40:FF:000004">
    <property type="entry name" value="Molecular chaperone DnaK"/>
    <property type="match status" value="1"/>
</dbReference>
<dbReference type="FunFam" id="3.90.640.10:FF:000003">
    <property type="entry name" value="Molecular chaperone DnaK"/>
    <property type="match status" value="1"/>
</dbReference>
<dbReference type="Gene3D" id="1.20.1270.10">
    <property type="match status" value="1"/>
</dbReference>
<dbReference type="Gene3D" id="3.30.420.40">
    <property type="match status" value="2"/>
</dbReference>
<dbReference type="Gene3D" id="3.90.640.10">
    <property type="entry name" value="Actin, Chain A, domain 4"/>
    <property type="match status" value="1"/>
</dbReference>
<dbReference type="Gene3D" id="2.60.34.10">
    <property type="entry name" value="Substrate Binding Domain Of DNAk, Chain A, domain 1"/>
    <property type="match status" value="1"/>
</dbReference>
<dbReference type="HAMAP" id="MF_00332">
    <property type="entry name" value="DnaK"/>
    <property type="match status" value="1"/>
</dbReference>
<dbReference type="InterPro" id="IPR043129">
    <property type="entry name" value="ATPase_NBD"/>
</dbReference>
<dbReference type="InterPro" id="IPR012725">
    <property type="entry name" value="Chaperone_DnaK"/>
</dbReference>
<dbReference type="InterPro" id="IPR018181">
    <property type="entry name" value="Heat_shock_70_CS"/>
</dbReference>
<dbReference type="InterPro" id="IPR029048">
    <property type="entry name" value="HSP70_C_sf"/>
</dbReference>
<dbReference type="InterPro" id="IPR029047">
    <property type="entry name" value="HSP70_peptide-bd_sf"/>
</dbReference>
<dbReference type="InterPro" id="IPR013126">
    <property type="entry name" value="Hsp_70_fam"/>
</dbReference>
<dbReference type="NCBIfam" id="NF001413">
    <property type="entry name" value="PRK00290.1"/>
    <property type="match status" value="1"/>
</dbReference>
<dbReference type="NCBIfam" id="NF003520">
    <property type="entry name" value="PRK05183.1"/>
    <property type="match status" value="1"/>
</dbReference>
<dbReference type="NCBIfam" id="TIGR02350">
    <property type="entry name" value="prok_dnaK"/>
    <property type="match status" value="1"/>
</dbReference>
<dbReference type="PANTHER" id="PTHR19375">
    <property type="entry name" value="HEAT SHOCK PROTEIN 70KDA"/>
    <property type="match status" value="1"/>
</dbReference>
<dbReference type="Pfam" id="PF00012">
    <property type="entry name" value="HSP70"/>
    <property type="match status" value="1"/>
</dbReference>
<dbReference type="PRINTS" id="PR00301">
    <property type="entry name" value="HEATSHOCK70"/>
</dbReference>
<dbReference type="SUPFAM" id="SSF53067">
    <property type="entry name" value="Actin-like ATPase domain"/>
    <property type="match status" value="2"/>
</dbReference>
<dbReference type="SUPFAM" id="SSF100934">
    <property type="entry name" value="Heat shock protein 70kD (HSP70), C-terminal subdomain"/>
    <property type="match status" value="1"/>
</dbReference>
<dbReference type="SUPFAM" id="SSF100920">
    <property type="entry name" value="Heat shock protein 70kD (HSP70), peptide-binding domain"/>
    <property type="match status" value="1"/>
</dbReference>
<dbReference type="PROSITE" id="PS00297">
    <property type="entry name" value="HSP70_1"/>
    <property type="match status" value="1"/>
</dbReference>
<dbReference type="PROSITE" id="PS00329">
    <property type="entry name" value="HSP70_2"/>
    <property type="match status" value="1"/>
</dbReference>
<dbReference type="PROSITE" id="PS01036">
    <property type="entry name" value="HSP70_3"/>
    <property type="match status" value="1"/>
</dbReference>
<organism>
    <name type="scientific">Cereibacter sphaeroides (strain ATCC 17025 / ATH 2.4.3)</name>
    <name type="common">Rhodobacter sphaeroides</name>
    <dbReference type="NCBI Taxonomy" id="349102"/>
    <lineage>
        <taxon>Bacteria</taxon>
        <taxon>Pseudomonadati</taxon>
        <taxon>Pseudomonadota</taxon>
        <taxon>Alphaproteobacteria</taxon>
        <taxon>Rhodobacterales</taxon>
        <taxon>Paracoccaceae</taxon>
        <taxon>Cereibacter</taxon>
    </lineage>
</organism>